<dbReference type="EC" id="2.5.1.141" evidence="1"/>
<dbReference type="EMBL" id="CP001612">
    <property type="protein sequence ID" value="ACP53368.1"/>
    <property type="molecule type" value="Genomic_DNA"/>
</dbReference>
<dbReference type="SMR" id="C3PN58"/>
<dbReference type="KEGG" id="raf:RAF_ORF0436"/>
<dbReference type="HOGENOM" id="CLU_029631_0_2_5"/>
<dbReference type="UniPathway" id="UPA00834">
    <property type="reaction ID" value="UER00712"/>
</dbReference>
<dbReference type="Proteomes" id="UP000002305">
    <property type="component" value="Chromosome"/>
</dbReference>
<dbReference type="GO" id="GO:0005886">
    <property type="term" value="C:plasma membrane"/>
    <property type="evidence" value="ECO:0007669"/>
    <property type="project" value="UniProtKB-SubCell"/>
</dbReference>
<dbReference type="GO" id="GO:0008495">
    <property type="term" value="F:protoheme IX farnesyltransferase activity"/>
    <property type="evidence" value="ECO:0007669"/>
    <property type="project" value="UniProtKB-UniRule"/>
</dbReference>
<dbReference type="GO" id="GO:0048034">
    <property type="term" value="P:heme O biosynthetic process"/>
    <property type="evidence" value="ECO:0007669"/>
    <property type="project" value="UniProtKB-UniRule"/>
</dbReference>
<dbReference type="CDD" id="cd13957">
    <property type="entry name" value="PT_UbiA_Cox10"/>
    <property type="match status" value="1"/>
</dbReference>
<dbReference type="Gene3D" id="1.10.357.140">
    <property type="entry name" value="UbiA prenyltransferase"/>
    <property type="match status" value="1"/>
</dbReference>
<dbReference type="HAMAP" id="MF_00154">
    <property type="entry name" value="CyoE_CtaB"/>
    <property type="match status" value="1"/>
</dbReference>
<dbReference type="InterPro" id="IPR006369">
    <property type="entry name" value="Protohaem_IX_farnesylTrfase"/>
</dbReference>
<dbReference type="InterPro" id="IPR000537">
    <property type="entry name" value="UbiA_prenyltransferase"/>
</dbReference>
<dbReference type="InterPro" id="IPR030470">
    <property type="entry name" value="UbiA_prenylTrfase_CS"/>
</dbReference>
<dbReference type="InterPro" id="IPR044878">
    <property type="entry name" value="UbiA_sf"/>
</dbReference>
<dbReference type="NCBIfam" id="TIGR01473">
    <property type="entry name" value="cyoE_ctaB"/>
    <property type="match status" value="1"/>
</dbReference>
<dbReference type="NCBIfam" id="NF003349">
    <property type="entry name" value="PRK04375.1-2"/>
    <property type="match status" value="1"/>
</dbReference>
<dbReference type="PANTHER" id="PTHR43448:SF7">
    <property type="entry name" value="4-HYDROXYBENZOATE SOLANESYLTRANSFERASE"/>
    <property type="match status" value="1"/>
</dbReference>
<dbReference type="PANTHER" id="PTHR43448">
    <property type="entry name" value="PROTOHEME IX FARNESYLTRANSFERASE, MITOCHONDRIAL"/>
    <property type="match status" value="1"/>
</dbReference>
<dbReference type="Pfam" id="PF01040">
    <property type="entry name" value="UbiA"/>
    <property type="match status" value="1"/>
</dbReference>
<dbReference type="PROSITE" id="PS00943">
    <property type="entry name" value="UBIA"/>
    <property type="match status" value="1"/>
</dbReference>
<feature type="chain" id="PRO_1000203457" description="Protoheme IX farnesyltransferase">
    <location>
        <begin position="1"/>
        <end position="305"/>
    </location>
</feature>
<feature type="transmembrane region" description="Helical" evidence="1">
    <location>
        <begin position="31"/>
        <end position="51"/>
    </location>
</feature>
<feature type="transmembrane region" description="Helical" evidence="1">
    <location>
        <begin position="52"/>
        <end position="72"/>
    </location>
</feature>
<feature type="transmembrane region" description="Helical" evidence="1">
    <location>
        <begin position="96"/>
        <end position="118"/>
    </location>
</feature>
<feature type="transmembrane region" description="Helical" evidence="1">
    <location>
        <begin position="123"/>
        <end position="145"/>
    </location>
</feature>
<feature type="transmembrane region" description="Helical" evidence="1">
    <location>
        <begin position="151"/>
        <end position="171"/>
    </location>
</feature>
<feature type="transmembrane region" description="Helical" evidence="1">
    <location>
        <begin position="179"/>
        <end position="199"/>
    </location>
</feature>
<feature type="transmembrane region" description="Helical" evidence="1">
    <location>
        <begin position="225"/>
        <end position="245"/>
    </location>
</feature>
<feature type="transmembrane region" description="Helical" evidence="1">
    <location>
        <begin position="247"/>
        <end position="267"/>
    </location>
</feature>
<feature type="transmembrane region" description="Helical" evidence="1">
    <location>
        <begin position="281"/>
        <end position="301"/>
    </location>
</feature>
<reference key="1">
    <citation type="journal article" date="2009" name="BMC Genomics">
        <title>Analysis of the Rickettsia africae genome reveals that virulence acquisition in Rickettsia species may be explained by genome reduction.</title>
        <authorList>
            <person name="Fournier P.-E."/>
            <person name="El Karkouri K."/>
            <person name="Leroy Q."/>
            <person name="Robert C."/>
            <person name="Giumelli B."/>
            <person name="Renesto P."/>
            <person name="Socolovschi C."/>
            <person name="Parola P."/>
            <person name="Audic S."/>
            <person name="Raoult D."/>
        </authorList>
    </citation>
    <scope>NUCLEOTIDE SEQUENCE [LARGE SCALE GENOMIC DNA]</scope>
    <source>
        <strain>ESF-5</strain>
    </source>
</reference>
<evidence type="ECO:0000255" key="1">
    <source>
        <dbReference type="HAMAP-Rule" id="MF_00154"/>
    </source>
</evidence>
<organism>
    <name type="scientific">Rickettsia africae (strain ESF-5)</name>
    <dbReference type="NCBI Taxonomy" id="347255"/>
    <lineage>
        <taxon>Bacteria</taxon>
        <taxon>Pseudomonadati</taxon>
        <taxon>Pseudomonadota</taxon>
        <taxon>Alphaproteobacteria</taxon>
        <taxon>Rickettsiales</taxon>
        <taxon>Rickettsiaceae</taxon>
        <taxon>Rickettsieae</taxon>
        <taxon>Rickettsia</taxon>
        <taxon>spotted fever group</taxon>
    </lineage>
</organism>
<accession>C3PN58</accession>
<name>COXX_RICAE</name>
<protein>
    <recommendedName>
        <fullName evidence="1">Protoheme IX farnesyltransferase</fullName>
        <ecNumber evidence="1">2.5.1.141</ecNumber>
    </recommendedName>
    <alternativeName>
        <fullName evidence="1">Heme B farnesyltransferase</fullName>
    </alternativeName>
    <alternativeName>
        <fullName evidence="1">Heme O synthase</fullName>
    </alternativeName>
</protein>
<gene>
    <name evidence="1" type="primary">ctaB</name>
    <name type="ordered locus">RAF_ORF0436</name>
</gene>
<comment type="function">
    <text evidence="1">Converts heme B (protoheme IX) to heme O by substitution of the vinyl group on carbon 2 of heme B porphyrin ring with a hydroxyethyl farnesyl side group.</text>
</comment>
<comment type="catalytic activity">
    <reaction evidence="1">
        <text>heme b + (2E,6E)-farnesyl diphosphate + H2O = Fe(II)-heme o + diphosphate</text>
        <dbReference type="Rhea" id="RHEA:28070"/>
        <dbReference type="ChEBI" id="CHEBI:15377"/>
        <dbReference type="ChEBI" id="CHEBI:33019"/>
        <dbReference type="ChEBI" id="CHEBI:60344"/>
        <dbReference type="ChEBI" id="CHEBI:60530"/>
        <dbReference type="ChEBI" id="CHEBI:175763"/>
        <dbReference type="EC" id="2.5.1.141"/>
    </reaction>
</comment>
<comment type="pathway">
    <text evidence="1">Porphyrin-containing compound metabolism; heme O biosynthesis; heme O from protoheme: step 1/1.</text>
</comment>
<comment type="subcellular location">
    <subcellularLocation>
        <location evidence="1">Cell membrane</location>
        <topology evidence="1">Multi-pass membrane protein</topology>
    </subcellularLocation>
</comment>
<comment type="miscellaneous">
    <text evidence="1">Carbon 2 of the heme B porphyrin ring is defined according to the Fischer nomenclature.</text>
</comment>
<comment type="similarity">
    <text evidence="1">Belongs to the UbiA prenyltransferase family. Protoheme IX farnesyltransferase subfamily.</text>
</comment>
<keyword id="KW-1003">Cell membrane</keyword>
<keyword id="KW-0350">Heme biosynthesis</keyword>
<keyword id="KW-0472">Membrane</keyword>
<keyword id="KW-0808">Transferase</keyword>
<keyword id="KW-0812">Transmembrane</keyword>
<keyword id="KW-1133">Transmembrane helix</keyword>
<sequence length="305" mass="34354">MSSLVRPINLGKINHSQSTVKDYILLMKPRVMSLVIFTGFVGMWLAPYSVHPFIAGIAVVCIALGAGSAGAINMWYDRDIDSLMKRTQKRPIVRGVIESDEALSFGLITGFFAVFFMALCVNLLASFLLLFTIFYYICIYTIWLKRRSIQNIVIGGVSGALPPVIGYAAVSNTISLESIILFLIIFIWTPPHSWALALFCNDDYKNCKVPMMPAVKGTLYTKKQILIYSILLFIVSLMPFFIGMNNFIYLIISGILGVVFLYYAGSLFYDTPDNKQAKRFFAYSIFYLFFIFLLLYSTNTISTIS</sequence>
<proteinExistence type="inferred from homology"/>